<comment type="catalytic activity">
    <reaction evidence="1">
        <text>tRNA(Gly) + glycine + ATP = glycyl-tRNA(Gly) + AMP + diphosphate</text>
        <dbReference type="Rhea" id="RHEA:16013"/>
        <dbReference type="Rhea" id="RHEA-COMP:9664"/>
        <dbReference type="Rhea" id="RHEA-COMP:9683"/>
        <dbReference type="ChEBI" id="CHEBI:30616"/>
        <dbReference type="ChEBI" id="CHEBI:33019"/>
        <dbReference type="ChEBI" id="CHEBI:57305"/>
        <dbReference type="ChEBI" id="CHEBI:78442"/>
        <dbReference type="ChEBI" id="CHEBI:78522"/>
        <dbReference type="ChEBI" id="CHEBI:456215"/>
        <dbReference type="EC" id="6.1.1.14"/>
    </reaction>
</comment>
<comment type="subunit">
    <text evidence="1">Tetramer of two alpha and two beta subunits.</text>
</comment>
<comment type="subcellular location">
    <subcellularLocation>
        <location evidence="1">Cytoplasm</location>
    </subcellularLocation>
</comment>
<comment type="similarity">
    <text evidence="1">Belongs to the class-II aminoacyl-tRNA synthetase family.</text>
</comment>
<dbReference type="EC" id="6.1.1.14" evidence="1"/>
<dbReference type="EMBL" id="CP000446">
    <property type="protein sequence ID" value="ABI37091.1"/>
    <property type="molecule type" value="Genomic_DNA"/>
</dbReference>
<dbReference type="RefSeq" id="WP_011070431.1">
    <property type="nucleotide sequence ID" value="NC_008321.1"/>
</dbReference>
<dbReference type="SMR" id="Q0HPC6"/>
<dbReference type="GeneID" id="67441599"/>
<dbReference type="KEGG" id="she:Shewmr4_0009"/>
<dbReference type="HOGENOM" id="CLU_057066_1_0_6"/>
<dbReference type="GO" id="GO:0005829">
    <property type="term" value="C:cytosol"/>
    <property type="evidence" value="ECO:0007669"/>
    <property type="project" value="TreeGrafter"/>
</dbReference>
<dbReference type="GO" id="GO:0005524">
    <property type="term" value="F:ATP binding"/>
    <property type="evidence" value="ECO:0007669"/>
    <property type="project" value="UniProtKB-UniRule"/>
</dbReference>
<dbReference type="GO" id="GO:0004820">
    <property type="term" value="F:glycine-tRNA ligase activity"/>
    <property type="evidence" value="ECO:0007669"/>
    <property type="project" value="UniProtKB-UniRule"/>
</dbReference>
<dbReference type="GO" id="GO:0006426">
    <property type="term" value="P:glycyl-tRNA aminoacylation"/>
    <property type="evidence" value="ECO:0007669"/>
    <property type="project" value="UniProtKB-UniRule"/>
</dbReference>
<dbReference type="CDD" id="cd00733">
    <property type="entry name" value="GlyRS_alpha_core"/>
    <property type="match status" value="1"/>
</dbReference>
<dbReference type="FunFam" id="3.30.930.10:FF:000006">
    <property type="entry name" value="Glycine--tRNA ligase alpha subunit"/>
    <property type="match status" value="1"/>
</dbReference>
<dbReference type="Gene3D" id="3.30.930.10">
    <property type="entry name" value="Bira Bifunctional Protein, Domain 2"/>
    <property type="match status" value="1"/>
</dbReference>
<dbReference type="Gene3D" id="1.20.58.180">
    <property type="entry name" value="Class II aaRS and biotin synthetases, domain 2"/>
    <property type="match status" value="1"/>
</dbReference>
<dbReference type="HAMAP" id="MF_00254">
    <property type="entry name" value="Gly_tRNA_synth_alpha"/>
    <property type="match status" value="1"/>
</dbReference>
<dbReference type="InterPro" id="IPR045864">
    <property type="entry name" value="aa-tRNA-synth_II/BPL/LPL"/>
</dbReference>
<dbReference type="InterPro" id="IPR006194">
    <property type="entry name" value="Gly-tRNA-synth_heterodimer"/>
</dbReference>
<dbReference type="InterPro" id="IPR002310">
    <property type="entry name" value="Gly-tRNA_ligase_asu"/>
</dbReference>
<dbReference type="NCBIfam" id="TIGR00388">
    <property type="entry name" value="glyQ"/>
    <property type="match status" value="1"/>
</dbReference>
<dbReference type="NCBIfam" id="NF006827">
    <property type="entry name" value="PRK09348.1"/>
    <property type="match status" value="1"/>
</dbReference>
<dbReference type="PANTHER" id="PTHR30075:SF2">
    <property type="entry name" value="GLYCINE--TRNA LIGASE, CHLOROPLASTIC_MITOCHONDRIAL 2"/>
    <property type="match status" value="1"/>
</dbReference>
<dbReference type="PANTHER" id="PTHR30075">
    <property type="entry name" value="GLYCYL-TRNA SYNTHETASE"/>
    <property type="match status" value="1"/>
</dbReference>
<dbReference type="Pfam" id="PF02091">
    <property type="entry name" value="tRNA-synt_2e"/>
    <property type="match status" value="1"/>
</dbReference>
<dbReference type="PRINTS" id="PR01044">
    <property type="entry name" value="TRNASYNTHGA"/>
</dbReference>
<dbReference type="SUPFAM" id="SSF55681">
    <property type="entry name" value="Class II aaRS and biotin synthetases"/>
    <property type="match status" value="1"/>
</dbReference>
<dbReference type="PROSITE" id="PS50861">
    <property type="entry name" value="AA_TRNA_LIGASE_II_GLYAB"/>
    <property type="match status" value="1"/>
</dbReference>
<protein>
    <recommendedName>
        <fullName evidence="1">Glycine--tRNA ligase alpha subunit</fullName>
        <ecNumber evidence="1">6.1.1.14</ecNumber>
    </recommendedName>
    <alternativeName>
        <fullName evidence="1">Glycyl-tRNA synthetase alpha subunit</fullName>
        <shortName evidence="1">GlyRS</shortName>
    </alternativeName>
</protein>
<feature type="chain" id="PRO_1000047490" description="Glycine--tRNA ligase alpha subunit">
    <location>
        <begin position="1"/>
        <end position="301"/>
    </location>
</feature>
<reference key="1">
    <citation type="submission" date="2006-08" db="EMBL/GenBank/DDBJ databases">
        <title>Complete sequence of Shewanella sp. MR-4.</title>
        <authorList>
            <consortium name="US DOE Joint Genome Institute"/>
            <person name="Copeland A."/>
            <person name="Lucas S."/>
            <person name="Lapidus A."/>
            <person name="Barry K."/>
            <person name="Detter J.C."/>
            <person name="Glavina del Rio T."/>
            <person name="Hammon N."/>
            <person name="Israni S."/>
            <person name="Dalin E."/>
            <person name="Tice H."/>
            <person name="Pitluck S."/>
            <person name="Kiss H."/>
            <person name="Brettin T."/>
            <person name="Bruce D."/>
            <person name="Han C."/>
            <person name="Tapia R."/>
            <person name="Gilna P."/>
            <person name="Schmutz J."/>
            <person name="Larimer F."/>
            <person name="Land M."/>
            <person name="Hauser L."/>
            <person name="Kyrpides N."/>
            <person name="Mikhailova N."/>
            <person name="Nealson K."/>
            <person name="Konstantinidis K."/>
            <person name="Klappenbach J."/>
            <person name="Tiedje J."/>
            <person name="Richardson P."/>
        </authorList>
    </citation>
    <scope>NUCLEOTIDE SEQUENCE [LARGE SCALE GENOMIC DNA]</scope>
    <source>
        <strain>MR-4</strain>
    </source>
</reference>
<name>SYGA_SHESM</name>
<gene>
    <name evidence="1" type="primary">glyQ</name>
    <name type="ordered locus">Shewmr4_0009</name>
</gene>
<keyword id="KW-0030">Aminoacyl-tRNA synthetase</keyword>
<keyword id="KW-0067">ATP-binding</keyword>
<keyword id="KW-0963">Cytoplasm</keyword>
<keyword id="KW-0436">Ligase</keyword>
<keyword id="KW-0547">Nucleotide-binding</keyword>
<keyword id="KW-0648">Protein biosynthesis</keyword>
<evidence type="ECO:0000255" key="1">
    <source>
        <dbReference type="HAMAP-Rule" id="MF_00254"/>
    </source>
</evidence>
<sequence length="301" mass="34478">MTTKHDVKTFQGFILTLQEYWAQQGCAIVQPLDMEVGAGTFHPQTFLRSLGPEPMSSAYVQPSRRPTDGRYGENPNRLQHYYQFQVVLKPSPDNIQELYLGSLQALGIDTQIHDIRFVEDNWESPTLGAWGLGWEVWLNGMEVTQFTYFQQVGGLECSPVTGEITYGLERLAMYIQGVDSVYDLVWTDGPMGRITYGDVFHQNEVEQSTYNFEHADVDFMFALFDQCEKMCQHLLSLEKPLPLPAYEQVMKASHAFNLLDARHAISVTERQRYILRVRTMAKAVAESYYQAREALGFPMCK</sequence>
<proteinExistence type="inferred from homology"/>
<organism>
    <name type="scientific">Shewanella sp. (strain MR-4)</name>
    <dbReference type="NCBI Taxonomy" id="60480"/>
    <lineage>
        <taxon>Bacteria</taxon>
        <taxon>Pseudomonadati</taxon>
        <taxon>Pseudomonadota</taxon>
        <taxon>Gammaproteobacteria</taxon>
        <taxon>Alteromonadales</taxon>
        <taxon>Shewanellaceae</taxon>
        <taxon>Shewanella</taxon>
    </lineage>
</organism>
<accession>Q0HPC6</accession>